<keyword id="KW-0150">Chloroplast</keyword>
<keyword id="KW-0472">Membrane</keyword>
<keyword id="KW-0520">NAD</keyword>
<keyword id="KW-0521">NADP</keyword>
<keyword id="KW-0934">Plastid</keyword>
<keyword id="KW-0618">Plastoquinone</keyword>
<keyword id="KW-0874">Quinone</keyword>
<keyword id="KW-0691">RNA editing</keyword>
<keyword id="KW-0793">Thylakoid</keyword>
<keyword id="KW-1278">Translocase</keyword>
<keyword id="KW-0812">Transmembrane</keyword>
<keyword id="KW-1133">Transmembrane helix</keyword>
<name>NU4C_LEPVR</name>
<reference key="1">
    <citation type="submission" date="2007-03" db="EMBL/GenBank/DDBJ databases">
        <title>Sequencing analysis of Lepidium virginicum JO26 chloroplast DNA.</title>
        <authorList>
            <person name="Hosouchi T."/>
            <person name="Tsuruoka H."/>
            <person name="Kotani H."/>
        </authorList>
    </citation>
    <scope>NUCLEOTIDE SEQUENCE [LARGE SCALE GENOMIC DNA]</scope>
</reference>
<geneLocation type="chloroplast"/>
<organism>
    <name type="scientific">Lepidium virginicum</name>
    <name type="common">Virginia pepperweed</name>
    <dbReference type="NCBI Taxonomy" id="59292"/>
    <lineage>
        <taxon>Eukaryota</taxon>
        <taxon>Viridiplantae</taxon>
        <taxon>Streptophyta</taxon>
        <taxon>Embryophyta</taxon>
        <taxon>Tracheophyta</taxon>
        <taxon>Spermatophyta</taxon>
        <taxon>Magnoliopsida</taxon>
        <taxon>eudicotyledons</taxon>
        <taxon>Gunneridae</taxon>
        <taxon>Pentapetalae</taxon>
        <taxon>rosids</taxon>
        <taxon>malvids</taxon>
        <taxon>Brassicales</taxon>
        <taxon>Brassicaceae</taxon>
        <taxon>Lepidieae</taxon>
        <taxon>Lepidium</taxon>
    </lineage>
</organism>
<proteinExistence type="inferred from homology"/>
<sequence>MNDFPWLTIIVIFPISAGSLMLFLPHRGNKVNKWYTICICILELLLTTYAFCYNFKMDDPLIQLSEGYKWINFFDFYWRMGVDGLSIGTILLTGFITTLATLAAFPVTRDSRLFHFLMLAMYSGQIGSFSSRDLLLFFIMWELELIPVYLLLAMWGGKKRLYSATKFILYTAGSSIFLLIGVLGLSLYGSNEPTLNLELLANQSYPVTLEILFYIGFLIAFAVKLPIIPLHTWLPDTHGEAHYSTCMLLAGILLKMGAYGLVRINMELLPHAHSMFSPWLLVVGTIQIIYAASTSPGQRNLKKRIAYSSVSHMGFIIIGISSITDPGLNGAILQIISHGFIGAALFFLAGTSYDRIRLVYLDEMGGMAISIPKIFTMFTILSMASLALPGMSGFVAELIVFFGIITSQKYFLISKILIIFVMAIGMILTPIYLLSMSRQMFYGYKLINVKNFSFFDSGPRELFLSISILLPIIGIGIYPDFVLSLASDKVESILSNYFYG</sequence>
<protein>
    <recommendedName>
        <fullName evidence="2">NAD(P)H-quinone oxidoreductase chain 4, chloroplastic</fullName>
        <ecNumber evidence="2">7.1.1.-</ecNumber>
    </recommendedName>
    <alternativeName>
        <fullName evidence="2">NAD(P)H dehydrogenase, chain 4</fullName>
    </alternativeName>
    <alternativeName>
        <fullName evidence="2">NADH-plastoquinone oxidoreductase chain 4</fullName>
    </alternativeName>
</protein>
<accession>A4QLF9</accession>
<gene>
    <name evidence="2" type="primary">ndhD</name>
</gene>
<comment type="catalytic activity">
    <reaction evidence="2">
        <text>a plastoquinone + NADH + (n+1) H(+)(in) = a plastoquinol + NAD(+) + n H(+)(out)</text>
        <dbReference type="Rhea" id="RHEA:42608"/>
        <dbReference type="Rhea" id="RHEA-COMP:9561"/>
        <dbReference type="Rhea" id="RHEA-COMP:9562"/>
        <dbReference type="ChEBI" id="CHEBI:15378"/>
        <dbReference type="ChEBI" id="CHEBI:17757"/>
        <dbReference type="ChEBI" id="CHEBI:57540"/>
        <dbReference type="ChEBI" id="CHEBI:57945"/>
        <dbReference type="ChEBI" id="CHEBI:62192"/>
    </reaction>
</comment>
<comment type="catalytic activity">
    <reaction evidence="2">
        <text>a plastoquinone + NADPH + (n+1) H(+)(in) = a plastoquinol + NADP(+) + n H(+)(out)</text>
        <dbReference type="Rhea" id="RHEA:42612"/>
        <dbReference type="Rhea" id="RHEA-COMP:9561"/>
        <dbReference type="Rhea" id="RHEA-COMP:9562"/>
        <dbReference type="ChEBI" id="CHEBI:15378"/>
        <dbReference type="ChEBI" id="CHEBI:17757"/>
        <dbReference type="ChEBI" id="CHEBI:57783"/>
        <dbReference type="ChEBI" id="CHEBI:58349"/>
        <dbReference type="ChEBI" id="CHEBI:62192"/>
    </reaction>
</comment>
<comment type="subcellular location">
    <subcellularLocation>
        <location evidence="2">Plastid</location>
        <location evidence="2">Chloroplast thylakoid membrane</location>
        <topology evidence="2">Multi-pass membrane protein</topology>
    </subcellularLocation>
</comment>
<comment type="RNA editing">
    <location>
        <position position="1" evidence="1"/>
    </location>
    <text evidence="1">The initiator methionine is created by RNA editing.</text>
</comment>
<comment type="similarity">
    <text evidence="2">Belongs to the complex I subunit 4 family.</text>
</comment>
<feature type="chain" id="PRO_0000343289" description="NAD(P)H-quinone oxidoreductase chain 4, chloroplastic">
    <location>
        <begin position="1"/>
        <end position="500"/>
    </location>
</feature>
<feature type="transmembrane region" description="Helical" evidence="2">
    <location>
        <begin position="4"/>
        <end position="24"/>
    </location>
</feature>
<feature type="transmembrane region" description="Helical" evidence="2">
    <location>
        <begin position="35"/>
        <end position="55"/>
    </location>
</feature>
<feature type="transmembrane region" description="Helical" evidence="2">
    <location>
        <begin position="87"/>
        <end position="107"/>
    </location>
</feature>
<feature type="transmembrane region" description="Helical" evidence="2">
    <location>
        <begin position="113"/>
        <end position="130"/>
    </location>
</feature>
<feature type="transmembrane region" description="Helical" evidence="2">
    <location>
        <begin position="134"/>
        <end position="154"/>
    </location>
</feature>
<feature type="transmembrane region" description="Helical" evidence="2">
    <location>
        <begin position="167"/>
        <end position="187"/>
    </location>
</feature>
<feature type="transmembrane region" description="Helical" evidence="2">
    <location>
        <begin position="211"/>
        <end position="231"/>
    </location>
</feature>
<feature type="transmembrane region" description="Helical" evidence="2">
    <location>
        <begin position="242"/>
        <end position="262"/>
    </location>
</feature>
<feature type="transmembrane region" description="Helical" evidence="2">
    <location>
        <begin position="272"/>
        <end position="292"/>
    </location>
</feature>
<feature type="transmembrane region" description="Helical" evidence="2">
    <location>
        <begin position="305"/>
        <end position="325"/>
    </location>
</feature>
<feature type="transmembrane region" description="Helical" evidence="2">
    <location>
        <begin position="330"/>
        <end position="350"/>
    </location>
</feature>
<feature type="transmembrane region" description="Helical" evidence="2">
    <location>
        <begin position="386"/>
        <end position="406"/>
    </location>
</feature>
<feature type="transmembrane region" description="Helical" evidence="2">
    <location>
        <begin position="416"/>
        <end position="436"/>
    </location>
</feature>
<feature type="transmembrane region" description="Helical" evidence="2">
    <location>
        <begin position="462"/>
        <end position="482"/>
    </location>
</feature>
<dbReference type="EC" id="7.1.1.-" evidence="2"/>
<dbReference type="EMBL" id="AP009374">
    <property type="protein sequence ID" value="BAF50514.1"/>
    <property type="status" value="ALT_SEQ"/>
    <property type="molecule type" value="Genomic_DNA"/>
</dbReference>
<dbReference type="RefSeq" id="YP_001123689.2">
    <property type="nucleotide sequence ID" value="NC_009273.1"/>
</dbReference>
<dbReference type="SMR" id="A4QLF9"/>
<dbReference type="GeneID" id="4962004"/>
<dbReference type="GO" id="GO:0009535">
    <property type="term" value="C:chloroplast thylakoid membrane"/>
    <property type="evidence" value="ECO:0007669"/>
    <property type="project" value="UniProtKB-SubCell"/>
</dbReference>
<dbReference type="GO" id="GO:0008137">
    <property type="term" value="F:NADH dehydrogenase (ubiquinone) activity"/>
    <property type="evidence" value="ECO:0007669"/>
    <property type="project" value="InterPro"/>
</dbReference>
<dbReference type="GO" id="GO:0048039">
    <property type="term" value="F:ubiquinone binding"/>
    <property type="evidence" value="ECO:0007669"/>
    <property type="project" value="TreeGrafter"/>
</dbReference>
<dbReference type="GO" id="GO:0042773">
    <property type="term" value="P:ATP synthesis coupled electron transport"/>
    <property type="evidence" value="ECO:0007669"/>
    <property type="project" value="InterPro"/>
</dbReference>
<dbReference type="GO" id="GO:0015990">
    <property type="term" value="P:electron transport coupled proton transport"/>
    <property type="evidence" value="ECO:0007669"/>
    <property type="project" value="TreeGrafter"/>
</dbReference>
<dbReference type="HAMAP" id="MF_00491">
    <property type="entry name" value="NDH1_NuoM"/>
    <property type="match status" value="1"/>
</dbReference>
<dbReference type="InterPro" id="IPR022997">
    <property type="entry name" value="NADH_Q_OxRdtase_chain4"/>
</dbReference>
<dbReference type="InterPro" id="IPR010227">
    <property type="entry name" value="NADH_Q_OxRdtase_chainM/4"/>
</dbReference>
<dbReference type="InterPro" id="IPR003918">
    <property type="entry name" value="NADH_UbQ_OxRdtase"/>
</dbReference>
<dbReference type="InterPro" id="IPR001750">
    <property type="entry name" value="ND/Mrp_TM"/>
</dbReference>
<dbReference type="NCBIfam" id="TIGR01972">
    <property type="entry name" value="NDH_I_M"/>
    <property type="match status" value="1"/>
</dbReference>
<dbReference type="PANTHER" id="PTHR43507:SF21">
    <property type="entry name" value="NAD(P)H-QUINONE OXIDOREDUCTASE CHAIN 4, CHLOROPLASTIC"/>
    <property type="match status" value="1"/>
</dbReference>
<dbReference type="PANTHER" id="PTHR43507">
    <property type="entry name" value="NADH-UBIQUINONE OXIDOREDUCTASE CHAIN 4"/>
    <property type="match status" value="1"/>
</dbReference>
<dbReference type="Pfam" id="PF00361">
    <property type="entry name" value="Proton_antipo_M"/>
    <property type="match status" value="1"/>
</dbReference>
<dbReference type="PRINTS" id="PR01437">
    <property type="entry name" value="NUOXDRDTASE4"/>
</dbReference>
<evidence type="ECO:0000250" key="1"/>
<evidence type="ECO:0000255" key="2">
    <source>
        <dbReference type="HAMAP-Rule" id="MF_00491"/>
    </source>
</evidence>